<keyword id="KW-0002">3D-structure</keyword>
<keyword id="KW-0963">Cytoplasm</keyword>
<keyword id="KW-0378">Hydrolase</keyword>
<keyword id="KW-0479">Metal-binding</keyword>
<keyword id="KW-0539">Nucleus</keyword>
<keyword id="KW-1185">Reference proteome</keyword>
<keyword id="KW-0862">Zinc</keyword>
<feature type="chain" id="PRO_0000443861" description="Guanosine deaminase">
    <location>
        <begin position="1"/>
        <end position="185"/>
    </location>
</feature>
<feature type="domain" description="CMP/dCMP-type deaminase" evidence="1">
    <location>
        <begin position="28"/>
        <end position="142"/>
    </location>
</feature>
<feature type="active site" description="Proton donor" evidence="1">
    <location>
        <position position="82"/>
    </location>
</feature>
<feature type="binding site" evidence="1">
    <location>
        <position position="80"/>
    </location>
    <ligand>
        <name>Zn(2+)</name>
        <dbReference type="ChEBI" id="CHEBI:29105"/>
        <note>catalytic</note>
    </ligand>
</feature>
<feature type="binding site" evidence="1">
    <location>
        <position position="110"/>
    </location>
    <ligand>
        <name>Zn(2+)</name>
        <dbReference type="ChEBI" id="CHEBI:29105"/>
        <note>catalytic</note>
    </ligand>
</feature>
<feature type="binding site" evidence="1">
    <location>
        <position position="113"/>
    </location>
    <ligand>
        <name>Zn(2+)</name>
        <dbReference type="ChEBI" id="CHEBI:29105"/>
        <note>catalytic</note>
    </ligand>
</feature>
<feature type="helix" evidence="9">
    <location>
        <begin position="30"/>
        <end position="47"/>
    </location>
</feature>
<feature type="strand" evidence="9">
    <location>
        <begin position="49"/>
        <end position="52"/>
    </location>
</feature>
<feature type="strand" evidence="9">
    <location>
        <begin position="54"/>
        <end position="59"/>
    </location>
</feature>
<feature type="strand" evidence="9">
    <location>
        <begin position="62"/>
        <end position="68"/>
    </location>
</feature>
<feature type="helix" evidence="9">
    <location>
        <begin position="71"/>
        <end position="74"/>
    </location>
</feature>
<feature type="helix" evidence="9">
    <location>
        <begin position="81"/>
        <end position="93"/>
    </location>
</feature>
<feature type="strand" evidence="9">
    <location>
        <begin position="102"/>
        <end position="107"/>
    </location>
</feature>
<feature type="helix" evidence="9">
    <location>
        <begin position="111"/>
        <end position="120"/>
    </location>
</feature>
<feature type="strand" evidence="9">
    <location>
        <begin position="123"/>
        <end position="129"/>
    </location>
</feature>
<feature type="helix" evidence="9">
    <location>
        <begin position="131"/>
        <end position="135"/>
    </location>
</feature>
<feature type="turn" evidence="9">
    <location>
        <begin position="136"/>
        <end position="138"/>
    </location>
</feature>
<feature type="helix" evidence="9">
    <location>
        <begin position="145"/>
        <end position="148"/>
    </location>
</feature>
<feature type="strand" evidence="10">
    <location>
        <begin position="152"/>
        <end position="154"/>
    </location>
</feature>
<feature type="strand" evidence="9">
    <location>
        <begin position="158"/>
        <end position="162"/>
    </location>
</feature>
<feature type="helix" evidence="9">
    <location>
        <begin position="165"/>
        <end position="177"/>
    </location>
</feature>
<feature type="turn" evidence="9">
    <location>
        <begin position="178"/>
        <end position="180"/>
    </location>
</feature>
<feature type="turn" evidence="8">
    <location>
        <begin position="182"/>
        <end position="184"/>
    </location>
</feature>
<protein>
    <recommendedName>
        <fullName evidence="4">Guanosine deaminase</fullName>
        <ecNumber evidence="2">3.5.4.15</ecNumber>
    </recommendedName>
    <alternativeName>
        <fullName evidence="5">tRNA-specific adenosine deaminase TAD4</fullName>
        <shortName evidence="5">AtTAD4</shortName>
    </alternativeName>
</protein>
<reference key="1">
    <citation type="journal article" date="2000" name="Nature">
        <title>Sequence and analysis of chromosome 5 of the plant Arabidopsis thaliana.</title>
        <authorList>
            <person name="Tabata S."/>
            <person name="Kaneko T."/>
            <person name="Nakamura Y."/>
            <person name="Kotani H."/>
            <person name="Kato T."/>
            <person name="Asamizu E."/>
            <person name="Miyajima N."/>
            <person name="Sasamoto S."/>
            <person name="Kimura T."/>
            <person name="Hosouchi T."/>
            <person name="Kawashima K."/>
            <person name="Kohara M."/>
            <person name="Matsumoto M."/>
            <person name="Matsuno A."/>
            <person name="Muraki A."/>
            <person name="Nakayama S."/>
            <person name="Nakazaki N."/>
            <person name="Naruo K."/>
            <person name="Okumura S."/>
            <person name="Shinpo S."/>
            <person name="Takeuchi C."/>
            <person name="Wada T."/>
            <person name="Watanabe A."/>
            <person name="Yamada M."/>
            <person name="Yasuda M."/>
            <person name="Sato S."/>
            <person name="de la Bastide M."/>
            <person name="Huang E."/>
            <person name="Spiegel L."/>
            <person name="Gnoj L."/>
            <person name="O'Shaughnessy A."/>
            <person name="Preston R."/>
            <person name="Habermann K."/>
            <person name="Murray J."/>
            <person name="Johnson D."/>
            <person name="Rohlfing T."/>
            <person name="Nelson J."/>
            <person name="Stoneking T."/>
            <person name="Pepin K."/>
            <person name="Spieth J."/>
            <person name="Sekhon M."/>
            <person name="Armstrong J."/>
            <person name="Becker M."/>
            <person name="Belter E."/>
            <person name="Cordum H."/>
            <person name="Cordes M."/>
            <person name="Courtney L."/>
            <person name="Courtney W."/>
            <person name="Dante M."/>
            <person name="Du H."/>
            <person name="Edwards J."/>
            <person name="Fryman J."/>
            <person name="Haakensen B."/>
            <person name="Lamar E."/>
            <person name="Latreille P."/>
            <person name="Leonard S."/>
            <person name="Meyer R."/>
            <person name="Mulvaney E."/>
            <person name="Ozersky P."/>
            <person name="Riley A."/>
            <person name="Strowmatt C."/>
            <person name="Wagner-McPherson C."/>
            <person name="Wollam A."/>
            <person name="Yoakum M."/>
            <person name="Bell M."/>
            <person name="Dedhia N."/>
            <person name="Parnell L."/>
            <person name="Shah R."/>
            <person name="Rodriguez M."/>
            <person name="Hoon See L."/>
            <person name="Vil D."/>
            <person name="Baker J."/>
            <person name="Kirchoff K."/>
            <person name="Toth K."/>
            <person name="King L."/>
            <person name="Bahret A."/>
            <person name="Miller B."/>
            <person name="Marra M.A."/>
            <person name="Martienssen R."/>
            <person name="McCombie W.R."/>
            <person name="Wilson R.K."/>
            <person name="Murphy G."/>
            <person name="Bancroft I."/>
            <person name="Volckaert G."/>
            <person name="Wambutt R."/>
            <person name="Duesterhoeft A."/>
            <person name="Stiekema W."/>
            <person name="Pohl T."/>
            <person name="Entian K.-D."/>
            <person name="Terryn N."/>
            <person name="Hartley N."/>
            <person name="Bent E."/>
            <person name="Johnson S."/>
            <person name="Langham S.-A."/>
            <person name="McCullagh B."/>
            <person name="Robben J."/>
            <person name="Grymonprez B."/>
            <person name="Zimmermann W."/>
            <person name="Ramsperger U."/>
            <person name="Wedler H."/>
            <person name="Balke K."/>
            <person name="Wedler E."/>
            <person name="Peters S."/>
            <person name="van Staveren M."/>
            <person name="Dirkse W."/>
            <person name="Mooijman P."/>
            <person name="Klein Lankhorst R."/>
            <person name="Weitzenegger T."/>
            <person name="Bothe G."/>
            <person name="Rose M."/>
            <person name="Hauf J."/>
            <person name="Berneiser S."/>
            <person name="Hempel S."/>
            <person name="Feldpausch M."/>
            <person name="Lamberth S."/>
            <person name="Villarroel R."/>
            <person name="Gielen J."/>
            <person name="Ardiles W."/>
            <person name="Bents O."/>
            <person name="Lemcke K."/>
            <person name="Kolesov G."/>
            <person name="Mayer K.F.X."/>
            <person name="Rudd S."/>
            <person name="Schoof H."/>
            <person name="Schueller C."/>
            <person name="Zaccaria P."/>
            <person name="Mewes H.-W."/>
            <person name="Bevan M."/>
            <person name="Fransz P.F."/>
        </authorList>
    </citation>
    <scope>NUCLEOTIDE SEQUENCE [LARGE SCALE GENOMIC DNA]</scope>
    <source>
        <strain>cv. Columbia</strain>
    </source>
</reference>
<reference key="2">
    <citation type="journal article" date="2017" name="Plant J.">
        <title>Araport11: a complete reannotation of the Arabidopsis thaliana reference genome.</title>
        <authorList>
            <person name="Cheng C.Y."/>
            <person name="Krishnakumar V."/>
            <person name="Chan A.P."/>
            <person name="Thibaud-Nissen F."/>
            <person name="Schobel S."/>
            <person name="Town C.D."/>
        </authorList>
    </citation>
    <scope>GENOME REANNOTATION</scope>
    <source>
        <strain>cv. Columbia</strain>
    </source>
</reference>
<reference key="3">
    <citation type="journal article" date="2003" name="Science">
        <title>Empirical analysis of transcriptional activity in the Arabidopsis genome.</title>
        <authorList>
            <person name="Yamada K."/>
            <person name="Lim J."/>
            <person name="Dale J.M."/>
            <person name="Chen H."/>
            <person name="Shinn P."/>
            <person name="Palm C.J."/>
            <person name="Southwick A.M."/>
            <person name="Wu H.C."/>
            <person name="Kim C.J."/>
            <person name="Nguyen M."/>
            <person name="Pham P.K."/>
            <person name="Cheuk R.F."/>
            <person name="Karlin-Newmann G."/>
            <person name="Liu S.X."/>
            <person name="Lam B."/>
            <person name="Sakano H."/>
            <person name="Wu T."/>
            <person name="Yu G."/>
            <person name="Miranda M."/>
            <person name="Quach H.L."/>
            <person name="Tripp M."/>
            <person name="Chang C.H."/>
            <person name="Lee J.M."/>
            <person name="Toriumi M.J."/>
            <person name="Chan M.M."/>
            <person name="Tang C.C."/>
            <person name="Onodera C.S."/>
            <person name="Deng J.M."/>
            <person name="Akiyama K."/>
            <person name="Ansari Y."/>
            <person name="Arakawa T."/>
            <person name="Banh J."/>
            <person name="Banno F."/>
            <person name="Bowser L."/>
            <person name="Brooks S.Y."/>
            <person name="Carninci P."/>
            <person name="Chao Q."/>
            <person name="Choy N."/>
            <person name="Enju A."/>
            <person name="Goldsmith A.D."/>
            <person name="Gurjal M."/>
            <person name="Hansen N.F."/>
            <person name="Hayashizaki Y."/>
            <person name="Johnson-Hopson C."/>
            <person name="Hsuan V.W."/>
            <person name="Iida K."/>
            <person name="Karnes M."/>
            <person name="Khan S."/>
            <person name="Koesema E."/>
            <person name="Ishida J."/>
            <person name="Jiang P.X."/>
            <person name="Jones T."/>
            <person name="Kawai J."/>
            <person name="Kamiya A."/>
            <person name="Meyers C."/>
            <person name="Nakajima M."/>
            <person name="Narusaka M."/>
            <person name="Seki M."/>
            <person name="Sakurai T."/>
            <person name="Satou M."/>
            <person name="Tamse R."/>
            <person name="Vaysberg M."/>
            <person name="Wallender E.K."/>
            <person name="Wong C."/>
            <person name="Yamamura Y."/>
            <person name="Yuan S."/>
            <person name="Shinozaki K."/>
            <person name="Davis R.W."/>
            <person name="Theologis A."/>
            <person name="Ecker J.R."/>
        </authorList>
    </citation>
    <scope>NUCLEOTIDE SEQUENCE [LARGE SCALE MRNA]</scope>
    <source>
        <strain>cv. Columbia</strain>
    </source>
</reference>
<reference key="4">
    <citation type="journal article" date="2013" name="Plant Cell">
        <title>Plant purine nucleoside catabolism employs a guanosine deaminase required for the generation of xanthosine in Arabidopsis.</title>
        <authorList>
            <person name="Dahncke K."/>
            <person name="Witte C.P."/>
        </authorList>
    </citation>
    <scope>FUNCTION</scope>
    <scope>CATALYTIC ACTIVITY</scope>
    <scope>SUBCELLULAR LOCATION</scope>
    <scope>TISSUE SPECIFICITY</scope>
</reference>
<reference key="5">
    <citation type="journal article" date="2014" name="Plant Physiol.">
        <title>Identification of enzymes for adenosine-to-inosine editing and discovery of cytidine-to-uridine editing in nucleus-encoded transfer RNAs of Arabidopsis.</title>
        <authorList>
            <person name="Zhou W."/>
            <person name="Karcher D."/>
            <person name="Bock R."/>
        </authorList>
    </citation>
    <scope>SUBCELLULAR LOCATION</scope>
    <scope>DISRUPTION PHENOTYPE</scope>
</reference>
<sequence>MEEAKVEAKDGTISVASAFSGHQQAVHDSDHKFLTQAVEEAYKGVDCGDGGPFGAVIVHNNEVVASCHNMVLKYTDPTAHAEVTAIREACKKLNKIELSECEIYASCEPCPMCFGAIHLSRLKRLVYGAKAEAAIAIGFDDFIADALRGTGVYQKSSLEIKKADGNGAAIAEQVFQNTKEKFRLY</sequence>
<accession>Q94BU8</accession>
<evidence type="ECO:0000255" key="1">
    <source>
        <dbReference type="PROSITE-ProRule" id="PRU01083"/>
    </source>
</evidence>
<evidence type="ECO:0000269" key="2">
    <source>
    </source>
</evidence>
<evidence type="ECO:0000269" key="3">
    <source>
    </source>
</evidence>
<evidence type="ECO:0000303" key="4">
    <source>
    </source>
</evidence>
<evidence type="ECO:0000303" key="5">
    <source>
    </source>
</evidence>
<evidence type="ECO:0000305" key="6"/>
<evidence type="ECO:0000312" key="7">
    <source>
        <dbReference type="Araport" id="AT5G28050"/>
    </source>
</evidence>
<evidence type="ECO:0007829" key="8">
    <source>
        <dbReference type="PDB" id="7DBF"/>
    </source>
</evidence>
<evidence type="ECO:0007829" key="9">
    <source>
        <dbReference type="PDB" id="7DC9"/>
    </source>
</evidence>
<evidence type="ECO:0007829" key="10">
    <source>
        <dbReference type="PDB" id="7DCB"/>
    </source>
</evidence>
<organism>
    <name type="scientific">Arabidopsis thaliana</name>
    <name type="common">Mouse-ear cress</name>
    <dbReference type="NCBI Taxonomy" id="3702"/>
    <lineage>
        <taxon>Eukaryota</taxon>
        <taxon>Viridiplantae</taxon>
        <taxon>Streptophyta</taxon>
        <taxon>Embryophyta</taxon>
        <taxon>Tracheophyta</taxon>
        <taxon>Spermatophyta</taxon>
        <taxon>Magnoliopsida</taxon>
        <taxon>eudicotyledons</taxon>
        <taxon>Gunneridae</taxon>
        <taxon>Pentapetalae</taxon>
        <taxon>rosids</taxon>
        <taxon>malvids</taxon>
        <taxon>Brassicales</taxon>
        <taxon>Brassicaceae</taxon>
        <taxon>Camelineae</taxon>
        <taxon>Arabidopsis</taxon>
    </lineage>
</organism>
<gene>
    <name evidence="4" type="primary">GSDA</name>
    <name evidence="5" type="synonym">TAD4</name>
    <name evidence="7" type="ordered locus">At5g28050</name>
</gene>
<name>GSDA_ARATH</name>
<dbReference type="EC" id="3.5.4.15" evidence="2"/>
<dbReference type="EMBL" id="AC007627">
    <property type="status" value="NOT_ANNOTATED_CDS"/>
    <property type="molecule type" value="Genomic_DNA"/>
</dbReference>
<dbReference type="EMBL" id="CP002688">
    <property type="protein sequence ID" value="AED93768.1"/>
    <property type="molecule type" value="Genomic_DNA"/>
</dbReference>
<dbReference type="EMBL" id="AY039873">
    <property type="protein sequence ID" value="AAK63977.1"/>
    <property type="molecule type" value="mRNA"/>
</dbReference>
<dbReference type="EMBL" id="AY133663">
    <property type="protein sequence ID" value="AAM91493.1"/>
    <property type="molecule type" value="mRNA"/>
</dbReference>
<dbReference type="RefSeq" id="NP_198157.1">
    <property type="nucleotide sequence ID" value="NM_122688.4"/>
</dbReference>
<dbReference type="PDB" id="7DBF">
    <property type="method" value="X-ray"/>
    <property type="resolution" value="1.90 A"/>
    <property type="chains" value="A/D=29-185"/>
</dbReference>
<dbReference type="PDB" id="7DC9">
    <property type="method" value="X-ray"/>
    <property type="resolution" value="1.70 A"/>
    <property type="chains" value="A/D=29-185"/>
</dbReference>
<dbReference type="PDB" id="7DCA">
    <property type="method" value="X-ray"/>
    <property type="resolution" value="2.10 A"/>
    <property type="chains" value="A/D=29-185"/>
</dbReference>
<dbReference type="PDB" id="7DCB">
    <property type="method" value="X-ray"/>
    <property type="resolution" value="2.00 A"/>
    <property type="chains" value="A/D=29-185"/>
</dbReference>
<dbReference type="PDB" id="7DCW">
    <property type="method" value="X-ray"/>
    <property type="resolution" value="2.30 A"/>
    <property type="chains" value="A/D=29-185"/>
</dbReference>
<dbReference type="PDB" id="7DGC">
    <property type="method" value="X-ray"/>
    <property type="resolution" value="2.10 A"/>
    <property type="chains" value="A/D=29-185"/>
</dbReference>
<dbReference type="PDB" id="7DH1">
    <property type="method" value="X-ray"/>
    <property type="resolution" value="1.85 A"/>
    <property type="chains" value="A/D=29-185"/>
</dbReference>
<dbReference type="PDB" id="7DLC">
    <property type="method" value="X-ray"/>
    <property type="resolution" value="2.45 A"/>
    <property type="chains" value="A/D=29-185"/>
</dbReference>
<dbReference type="PDB" id="7DM5">
    <property type="method" value="X-ray"/>
    <property type="resolution" value="2.20 A"/>
    <property type="chains" value="A/D=29-185"/>
</dbReference>
<dbReference type="PDB" id="7DM6">
    <property type="method" value="X-ray"/>
    <property type="resolution" value="2.05 A"/>
    <property type="chains" value="A/D=29-185"/>
</dbReference>
<dbReference type="PDB" id="7DOW">
    <property type="method" value="X-ray"/>
    <property type="resolution" value="2.00 A"/>
    <property type="chains" value="A/D=29-185"/>
</dbReference>
<dbReference type="PDB" id="7DOX">
    <property type="method" value="X-ray"/>
    <property type="resolution" value="1.90 A"/>
    <property type="chains" value="A/D=29-185"/>
</dbReference>
<dbReference type="PDB" id="7DOY">
    <property type="method" value="X-ray"/>
    <property type="resolution" value="2.17 A"/>
    <property type="chains" value="A/D=29-185"/>
</dbReference>
<dbReference type="PDB" id="7DPK">
    <property type="method" value="X-ray"/>
    <property type="resolution" value="2.15 A"/>
    <property type="chains" value="A/D=29-185"/>
</dbReference>
<dbReference type="PDB" id="7DQN">
    <property type="method" value="X-ray"/>
    <property type="resolution" value="2.60 A"/>
    <property type="chains" value="A/D=29-185"/>
</dbReference>
<dbReference type="PDB" id="7W1Q">
    <property type="method" value="X-ray"/>
    <property type="resolution" value="2.30 A"/>
    <property type="chains" value="A/D=29-185"/>
</dbReference>
<dbReference type="PDBsum" id="7DBF"/>
<dbReference type="PDBsum" id="7DC9"/>
<dbReference type="PDBsum" id="7DCA"/>
<dbReference type="PDBsum" id="7DCB"/>
<dbReference type="PDBsum" id="7DCW"/>
<dbReference type="PDBsum" id="7DGC"/>
<dbReference type="PDBsum" id="7DH1"/>
<dbReference type="PDBsum" id="7DLC"/>
<dbReference type="PDBsum" id="7DM5"/>
<dbReference type="PDBsum" id="7DM6"/>
<dbReference type="PDBsum" id="7DOW"/>
<dbReference type="PDBsum" id="7DOX"/>
<dbReference type="PDBsum" id="7DOY"/>
<dbReference type="PDBsum" id="7DPK"/>
<dbReference type="PDBsum" id="7DQN"/>
<dbReference type="PDBsum" id="7W1Q"/>
<dbReference type="SMR" id="Q94BU8"/>
<dbReference type="FunCoup" id="Q94BU8">
    <property type="interactions" value="200"/>
</dbReference>
<dbReference type="IntAct" id="Q94BU8">
    <property type="interactions" value="1"/>
</dbReference>
<dbReference type="STRING" id="3702.Q94BU8"/>
<dbReference type="PaxDb" id="3702-AT5G28050.2"/>
<dbReference type="ProteomicsDB" id="247222"/>
<dbReference type="EnsemblPlants" id="AT5G28050.1">
    <property type="protein sequence ID" value="AT5G28050.1"/>
    <property type="gene ID" value="AT5G28050"/>
</dbReference>
<dbReference type="GeneID" id="832875"/>
<dbReference type="Gramene" id="AT5G28050.1">
    <property type="protein sequence ID" value="AT5G28050.1"/>
    <property type="gene ID" value="AT5G28050"/>
</dbReference>
<dbReference type="KEGG" id="ath:AT5G28050"/>
<dbReference type="Araport" id="AT5G28050"/>
<dbReference type="TAIR" id="AT5G28050">
    <property type="gene designation" value="GSDA"/>
</dbReference>
<dbReference type="HOGENOM" id="CLU_025810_5_2_1"/>
<dbReference type="InParanoid" id="Q94BU8"/>
<dbReference type="OMA" id="NIGADMK"/>
<dbReference type="OrthoDB" id="408702at2759"/>
<dbReference type="PhylomeDB" id="Q94BU8"/>
<dbReference type="BRENDA" id="3.5.4.15">
    <property type="organism ID" value="399"/>
</dbReference>
<dbReference type="PRO" id="PR:Q94BU8"/>
<dbReference type="Proteomes" id="UP000006548">
    <property type="component" value="Chromosome 5"/>
</dbReference>
<dbReference type="ExpressionAtlas" id="Q94BU8">
    <property type="expression patterns" value="baseline and differential"/>
</dbReference>
<dbReference type="GO" id="GO:0005737">
    <property type="term" value="C:cytoplasm"/>
    <property type="evidence" value="ECO:0000314"/>
    <property type="project" value="UniProtKB"/>
</dbReference>
<dbReference type="GO" id="GO:0005634">
    <property type="term" value="C:nucleus"/>
    <property type="evidence" value="ECO:0000314"/>
    <property type="project" value="UniProtKB"/>
</dbReference>
<dbReference type="GO" id="GO:0047974">
    <property type="term" value="F:guanosine deaminase activity"/>
    <property type="evidence" value="ECO:0000314"/>
    <property type="project" value="UniProtKB"/>
</dbReference>
<dbReference type="GO" id="GO:0008270">
    <property type="term" value="F:zinc ion binding"/>
    <property type="evidence" value="ECO:0007669"/>
    <property type="project" value="InterPro"/>
</dbReference>
<dbReference type="GO" id="GO:0006152">
    <property type="term" value="P:purine nucleoside catabolic process"/>
    <property type="evidence" value="ECO:0000314"/>
    <property type="project" value="UniProtKB"/>
</dbReference>
<dbReference type="CDD" id="cd01285">
    <property type="entry name" value="nucleoside_deaminase"/>
    <property type="match status" value="1"/>
</dbReference>
<dbReference type="FunFam" id="3.40.140.10:FF:000011">
    <property type="entry name" value="tRNA-specific adenosine deaminase"/>
    <property type="match status" value="1"/>
</dbReference>
<dbReference type="Gene3D" id="3.40.140.10">
    <property type="entry name" value="Cytidine Deaminase, domain 2"/>
    <property type="match status" value="1"/>
</dbReference>
<dbReference type="InterPro" id="IPR016192">
    <property type="entry name" value="APOBEC/CMP_deaminase_Zn-bd"/>
</dbReference>
<dbReference type="InterPro" id="IPR002125">
    <property type="entry name" value="CMP_dCMP_dom"/>
</dbReference>
<dbReference type="InterPro" id="IPR016193">
    <property type="entry name" value="Cytidine_deaminase-like"/>
</dbReference>
<dbReference type="PANTHER" id="PTHR11079:SF161">
    <property type="entry name" value="CMP_DCMP-TYPE DEAMINASE DOMAIN-CONTAINING PROTEIN"/>
    <property type="match status" value="1"/>
</dbReference>
<dbReference type="PANTHER" id="PTHR11079">
    <property type="entry name" value="CYTOSINE DEAMINASE FAMILY MEMBER"/>
    <property type="match status" value="1"/>
</dbReference>
<dbReference type="Pfam" id="PF00383">
    <property type="entry name" value="dCMP_cyt_deam_1"/>
    <property type="match status" value="1"/>
</dbReference>
<dbReference type="SUPFAM" id="SSF53927">
    <property type="entry name" value="Cytidine deaminase-like"/>
    <property type="match status" value="1"/>
</dbReference>
<dbReference type="PROSITE" id="PS00903">
    <property type="entry name" value="CYT_DCMP_DEAMINASES_1"/>
    <property type="match status" value="1"/>
</dbReference>
<dbReference type="PROSITE" id="PS51747">
    <property type="entry name" value="CYT_DCMP_DEAMINASES_2"/>
    <property type="match status" value="1"/>
</dbReference>
<comment type="function">
    <text evidence="2">Catalyzes the hydrolytic deamination of guanosine, producing xanthosine and ammonia. Deaminates exclusively guanosine and 2'-deoxyguanosine but no other aminated purines, pyrimidines, or pterines. Deamination of guanosine by GSDA is the only source of xanthosine production in Arabidopsis.</text>
</comment>
<comment type="catalytic activity">
    <reaction evidence="2">
        <text>guanosine + H2O + H(+) = xanthosine + NH4(+)</text>
        <dbReference type="Rhea" id="RHEA:12861"/>
        <dbReference type="ChEBI" id="CHEBI:15377"/>
        <dbReference type="ChEBI" id="CHEBI:15378"/>
        <dbReference type="ChEBI" id="CHEBI:16750"/>
        <dbReference type="ChEBI" id="CHEBI:18107"/>
        <dbReference type="ChEBI" id="CHEBI:28938"/>
        <dbReference type="EC" id="3.5.4.15"/>
    </reaction>
</comment>
<comment type="subcellular location">
    <subcellularLocation>
        <location evidence="2 3">Cytoplasm</location>
    </subcellularLocation>
    <subcellularLocation>
        <location evidence="3">Nucleus</location>
    </subcellularLocation>
    <text evidence="3">Localizes predominantly to the nucleus.</text>
</comment>
<comment type="tissue specificity">
    <text evidence="2">Expressed in roots, leaves, flowers and siliques.</text>
</comment>
<comment type="disruption phenotype">
    <text evidence="3">No visible phenotyper under normal growth conditions.</text>
</comment>
<comment type="similarity">
    <text evidence="6">Belongs to the cytidine and deoxycytidylate deaminase family.</text>
</comment>
<proteinExistence type="evidence at protein level"/>